<comment type="function">
    <text evidence="2">Part of the ABC transporter complex NikABCDE (Opp2) involved in nickel import. Probably responsible for energy coupling to the transport system. Required for full urease activity and plays a significant role in the virulence of S.aureus during urinary tract infection (UTI).</text>
</comment>
<comment type="catalytic activity">
    <reaction evidence="6">
        <text>Ni(2+)(out) + ATP + H2O = Ni(2+)(in) + ADP + phosphate + H(+)</text>
        <dbReference type="Rhea" id="RHEA:15557"/>
        <dbReference type="ChEBI" id="CHEBI:15377"/>
        <dbReference type="ChEBI" id="CHEBI:15378"/>
        <dbReference type="ChEBI" id="CHEBI:30616"/>
        <dbReference type="ChEBI" id="CHEBI:43474"/>
        <dbReference type="ChEBI" id="CHEBI:49786"/>
        <dbReference type="ChEBI" id="CHEBI:456216"/>
        <dbReference type="EC" id="7.2.2.11"/>
    </reaction>
    <physiologicalReaction direction="left-to-right" evidence="6">
        <dbReference type="Rhea" id="RHEA:15558"/>
    </physiologicalReaction>
</comment>
<comment type="subunit">
    <text evidence="2">The complex is composed of two ATP-binding proteins (NikD and NikE), two transmembrane proteins (NikB and NikC) and a solute-binding protein (NikA).</text>
</comment>
<comment type="subcellular location">
    <subcellularLocation>
        <location evidence="5">Cell membrane</location>
        <topology evidence="5">Peripheral membrane protein</topology>
    </subcellularLocation>
</comment>
<comment type="induction">
    <text evidence="2">Transcription is stable during the exponential phase and increases only in standard conditions in late exponential phase.</text>
</comment>
<comment type="disruption phenotype">
    <text evidence="2 3">Deletion of the nikBCDE operon strongly reduces nickel transport and urease activity. Mutant shows decreased virulence in a mouse model of ascending UTI (PubMed:20662775). Insertion mutant shows attenuated growth in several infection models (PubMed:9791183).</text>
</comment>
<comment type="similarity">
    <text evidence="5">Belongs to the ABC transporter superfamily.</text>
</comment>
<protein>
    <recommendedName>
        <fullName evidence="5">Nickel import system ATP-binding protein NikE</fullName>
        <ecNumber evidence="6">7.2.2.11</ecNumber>
    </recommendedName>
</protein>
<proteinExistence type="evidence at protein level"/>
<sequence length="233" mass="26257">MIELKHVTFGYNKKQMVLQDINITIPDGENVGILGESGCGKSTLASLVLGLFKPVKGEIYLSDNAVLPIFQHPLTSFNPDWTIETSLKEALYYYRGLTDNTAQDQLLLQHLSTFELNAQLLTKLPSEVSGGQLQRFNVMRSLLAQPRVLICDEITSNLDVIAEQNVINILKAQTITNLNHFIVISHDLSVLQRLVNRIIVLKDGMIVDDFAIEELFNVDRHPYTKELVQAFSY</sequence>
<reference key="1">
    <citation type="journal article" date="1998" name="Mol. Microbiol.">
        <title>Staphylococcus aureus genetic loci impacting growth and survival in multiple infection environments.</title>
        <authorList>
            <person name="Coulter S.N."/>
            <person name="Schwan W.R."/>
            <person name="Ng E.Y.W."/>
            <person name="Langhorne M.H."/>
            <person name="Ritchie H.D."/>
            <person name="Westbrock-Wadman S."/>
            <person name="Hufnagle W.O."/>
            <person name="Folger K.R."/>
            <person name="Bayer A.S."/>
            <person name="Stover C.K."/>
        </authorList>
    </citation>
    <scope>NUCLEOTIDE SEQUENCE [GENOMIC DNA]</scope>
    <scope>DISRUPTION PHENOTYPE</scope>
</reference>
<reference key="2">
    <citation type="submission" date="2002-12" db="EMBL/GenBank/DDBJ databases">
        <title>Role of the oligopeptide permease (opp-2) operon in Staphylococcus aureus biofilm formation.</title>
        <authorList>
            <person name="Cramton S.E."/>
            <person name="Madimidou F."/>
            <person name="Goetz F."/>
        </authorList>
    </citation>
    <scope>NUCLEOTIDE SEQUENCE [GENOMIC DNA]</scope>
</reference>
<reference key="3">
    <citation type="book" date="2006" name="Gram positive pathogens, 2nd edition">
        <title>The Staphylococcus aureus NCTC 8325 genome.</title>
        <editorList>
            <person name="Fischetti V."/>
            <person name="Novick R."/>
            <person name="Ferretti J."/>
            <person name="Portnoy D."/>
            <person name="Rood J."/>
        </editorList>
        <authorList>
            <person name="Gillaspy A.F."/>
            <person name="Worrell V."/>
            <person name="Orvis J."/>
            <person name="Roe B.A."/>
            <person name="Dyer D.W."/>
            <person name="Iandolo J.J."/>
        </authorList>
    </citation>
    <scope>NUCLEOTIDE SEQUENCE [LARGE SCALE GENOMIC DNA]</scope>
    <source>
        <strain>NCTC 8325 / PS 47</strain>
    </source>
</reference>
<reference key="4">
    <citation type="journal article" date="2010" name="Mol. Microbiol.">
        <title>A nickel ABC-transporter of Staphylococcus aureus is involved in urinary tract infection.</title>
        <authorList>
            <person name="Hiron A."/>
            <person name="Posteraro B."/>
            <person name="Carriere M."/>
            <person name="Remy L."/>
            <person name="Delporte C."/>
            <person name="La Sorda M."/>
            <person name="Sanguinetti M."/>
            <person name="Juillard V."/>
            <person name="Borezee-Durant E."/>
        </authorList>
    </citation>
    <scope>FUNCTION</scope>
    <scope>CATALYTIC ACTIVITY</scope>
    <scope>SUBUNIT</scope>
    <scope>INDUCTION</scope>
    <scope>DISRUPTION PHENOTYPE</scope>
    <source>
        <strain>RN6390</strain>
    </source>
</reference>
<organism>
    <name type="scientific">Staphylococcus aureus (strain NCTC 8325 / PS 47)</name>
    <dbReference type="NCBI Taxonomy" id="93061"/>
    <lineage>
        <taxon>Bacteria</taxon>
        <taxon>Bacillati</taxon>
        <taxon>Bacillota</taxon>
        <taxon>Bacilli</taxon>
        <taxon>Bacillales</taxon>
        <taxon>Staphylococcaceae</taxon>
        <taxon>Staphylococcus</taxon>
    </lineage>
</organism>
<feature type="chain" id="PRO_0000272188" description="Nickel import system ATP-binding protein NikE">
    <location>
        <begin position="1"/>
        <end position="233"/>
    </location>
</feature>
<feature type="domain" description="ABC transporter" evidence="1">
    <location>
        <begin position="2"/>
        <end position="228"/>
    </location>
</feature>
<feature type="binding site" evidence="1">
    <location>
        <begin position="35"/>
        <end position="42"/>
    </location>
    <ligand>
        <name>ATP</name>
        <dbReference type="ChEBI" id="CHEBI:30616"/>
    </ligand>
</feature>
<feature type="sequence conflict" description="In Ref. 2; AAO47758." evidence="5" ref="2">
    <original>D</original>
    <variation>N</variation>
    <location>
        <position position="203"/>
    </location>
</feature>
<dbReference type="EC" id="7.2.2.11" evidence="6"/>
<dbReference type="EMBL" id="AF076684">
    <property type="protein sequence ID" value="AAC69846.1"/>
    <property type="molecule type" value="Genomic_DNA"/>
</dbReference>
<dbReference type="EMBL" id="AY205146">
    <property type="protein sequence ID" value="AAO47758.1"/>
    <property type="molecule type" value="Genomic_DNA"/>
</dbReference>
<dbReference type="EMBL" id="CP000253">
    <property type="protein sequence ID" value="ABD30472.1"/>
    <property type="molecule type" value="Genomic_DNA"/>
</dbReference>
<dbReference type="RefSeq" id="WP_000571258.1">
    <property type="nucleotide sequence ID" value="NZ_LS483365.1"/>
</dbReference>
<dbReference type="RefSeq" id="YP_499904.1">
    <property type="nucleotide sequence ID" value="NC_007795.1"/>
</dbReference>
<dbReference type="SMR" id="Q2FYQ8"/>
<dbReference type="STRING" id="93061.SAOUHSC_01377"/>
<dbReference type="PaxDb" id="1280-SAXN108_1394"/>
<dbReference type="GeneID" id="3920786"/>
<dbReference type="KEGG" id="sao:SAOUHSC_01377"/>
<dbReference type="PATRIC" id="fig|93061.5.peg.1261"/>
<dbReference type="eggNOG" id="COG4608">
    <property type="taxonomic scope" value="Bacteria"/>
</dbReference>
<dbReference type="HOGENOM" id="CLU_000604_1_23_9"/>
<dbReference type="OrthoDB" id="9802264at2"/>
<dbReference type="PRO" id="PR:Q2FYQ8"/>
<dbReference type="Proteomes" id="UP000008816">
    <property type="component" value="Chromosome"/>
</dbReference>
<dbReference type="GO" id="GO:0005886">
    <property type="term" value="C:plasma membrane"/>
    <property type="evidence" value="ECO:0000318"/>
    <property type="project" value="GO_Central"/>
</dbReference>
<dbReference type="GO" id="GO:0015413">
    <property type="term" value="F:ABC-type nickel transporter activity"/>
    <property type="evidence" value="ECO:0007669"/>
    <property type="project" value="UniProtKB-EC"/>
</dbReference>
<dbReference type="GO" id="GO:0005524">
    <property type="term" value="F:ATP binding"/>
    <property type="evidence" value="ECO:0007669"/>
    <property type="project" value="UniProtKB-KW"/>
</dbReference>
<dbReference type="GO" id="GO:0016887">
    <property type="term" value="F:ATP hydrolysis activity"/>
    <property type="evidence" value="ECO:0007669"/>
    <property type="project" value="InterPro"/>
</dbReference>
<dbReference type="GO" id="GO:0022857">
    <property type="term" value="F:transmembrane transporter activity"/>
    <property type="evidence" value="ECO:0000318"/>
    <property type="project" value="GO_Central"/>
</dbReference>
<dbReference type="GO" id="GO:0055085">
    <property type="term" value="P:transmembrane transport"/>
    <property type="evidence" value="ECO:0000318"/>
    <property type="project" value="GO_Central"/>
</dbReference>
<dbReference type="CDD" id="cd03257">
    <property type="entry name" value="ABC_NikE_OppD_transporters"/>
    <property type="match status" value="1"/>
</dbReference>
<dbReference type="FunFam" id="3.40.50.300:FF:001829">
    <property type="entry name" value="Nickel import system ATP-binding protein NikE"/>
    <property type="match status" value="1"/>
</dbReference>
<dbReference type="Gene3D" id="3.40.50.300">
    <property type="entry name" value="P-loop containing nucleotide triphosphate hydrolases"/>
    <property type="match status" value="1"/>
</dbReference>
<dbReference type="InterPro" id="IPR003593">
    <property type="entry name" value="AAA+_ATPase"/>
</dbReference>
<dbReference type="InterPro" id="IPR050319">
    <property type="entry name" value="ABC_transp_ATP-bind"/>
</dbReference>
<dbReference type="InterPro" id="IPR003439">
    <property type="entry name" value="ABC_transporter-like_ATP-bd"/>
</dbReference>
<dbReference type="InterPro" id="IPR027417">
    <property type="entry name" value="P-loop_NTPase"/>
</dbReference>
<dbReference type="PANTHER" id="PTHR43776">
    <property type="entry name" value="TRANSPORT ATP-BINDING PROTEIN"/>
    <property type="match status" value="1"/>
</dbReference>
<dbReference type="Pfam" id="PF00005">
    <property type="entry name" value="ABC_tran"/>
    <property type="match status" value="1"/>
</dbReference>
<dbReference type="SMART" id="SM00382">
    <property type="entry name" value="AAA"/>
    <property type="match status" value="1"/>
</dbReference>
<dbReference type="SUPFAM" id="SSF52540">
    <property type="entry name" value="P-loop containing nucleoside triphosphate hydrolases"/>
    <property type="match status" value="1"/>
</dbReference>
<dbReference type="PROSITE" id="PS50893">
    <property type="entry name" value="ABC_TRANSPORTER_2"/>
    <property type="match status" value="1"/>
</dbReference>
<name>NIKE_STAA8</name>
<keyword id="KW-0067">ATP-binding</keyword>
<keyword id="KW-1003">Cell membrane</keyword>
<keyword id="KW-0406">Ion transport</keyword>
<keyword id="KW-0472">Membrane</keyword>
<keyword id="KW-0533">Nickel</keyword>
<keyword id="KW-0921">Nickel transport</keyword>
<keyword id="KW-0547">Nucleotide-binding</keyword>
<keyword id="KW-1185">Reference proteome</keyword>
<keyword id="KW-1278">Translocase</keyword>
<keyword id="KW-0813">Transport</keyword>
<accession>Q2FYQ8</accession>
<accession>Q84AN4</accession>
<accession>Q9ZGN3</accession>
<evidence type="ECO:0000255" key="1">
    <source>
        <dbReference type="PROSITE-ProRule" id="PRU00434"/>
    </source>
</evidence>
<evidence type="ECO:0000269" key="2">
    <source>
    </source>
</evidence>
<evidence type="ECO:0000269" key="3">
    <source>
    </source>
</evidence>
<evidence type="ECO:0000303" key="4">
    <source>
    </source>
</evidence>
<evidence type="ECO:0000305" key="5"/>
<evidence type="ECO:0000305" key="6">
    <source>
    </source>
</evidence>
<gene>
    <name evidence="4" type="primary">nikE</name>
    <name type="synonym">opp-2F</name>
    <name type="synonym">oppF2</name>
    <name type="ordered locus">SAOUHSC_01377</name>
</gene>